<evidence type="ECO:0000255" key="1">
    <source>
        <dbReference type="HAMAP-Rule" id="MF_01369"/>
    </source>
</evidence>
<evidence type="ECO:0000305" key="2"/>
<gene>
    <name evidence="1" type="primary">rplW</name>
    <name type="ordered locus">SP_0211</name>
</gene>
<comment type="function">
    <text evidence="1">One of the early assembly proteins it binds 23S rRNA. One of the proteins that surrounds the polypeptide exit tunnel on the outside of the ribosome. Forms the main docking site for trigger factor binding to the ribosome.</text>
</comment>
<comment type="subunit">
    <text evidence="1">Part of the 50S ribosomal subunit. Contacts protein L29, and trigger factor when it is bound to the ribosome.</text>
</comment>
<comment type="similarity">
    <text evidence="1">Belongs to the universal ribosomal protein uL23 family.</text>
</comment>
<name>RL23_STRPN</name>
<keyword id="KW-1185">Reference proteome</keyword>
<keyword id="KW-0687">Ribonucleoprotein</keyword>
<keyword id="KW-0689">Ribosomal protein</keyword>
<keyword id="KW-0694">RNA-binding</keyword>
<keyword id="KW-0699">rRNA-binding</keyword>
<proteinExistence type="inferred from homology"/>
<organism>
    <name type="scientific">Streptococcus pneumoniae serotype 4 (strain ATCC BAA-334 / TIGR4)</name>
    <dbReference type="NCBI Taxonomy" id="170187"/>
    <lineage>
        <taxon>Bacteria</taxon>
        <taxon>Bacillati</taxon>
        <taxon>Bacillota</taxon>
        <taxon>Bacilli</taxon>
        <taxon>Lactobacillales</taxon>
        <taxon>Streptococcaceae</taxon>
        <taxon>Streptococcus</taxon>
    </lineage>
</organism>
<reference key="1">
    <citation type="journal article" date="2001" name="Science">
        <title>Complete genome sequence of a virulent isolate of Streptococcus pneumoniae.</title>
        <authorList>
            <person name="Tettelin H."/>
            <person name="Nelson K.E."/>
            <person name="Paulsen I.T."/>
            <person name="Eisen J.A."/>
            <person name="Read T.D."/>
            <person name="Peterson S.N."/>
            <person name="Heidelberg J.F."/>
            <person name="DeBoy R.T."/>
            <person name="Haft D.H."/>
            <person name="Dodson R.J."/>
            <person name="Durkin A.S."/>
            <person name="Gwinn M.L."/>
            <person name="Kolonay J.F."/>
            <person name="Nelson W.C."/>
            <person name="Peterson J.D."/>
            <person name="Umayam L.A."/>
            <person name="White O."/>
            <person name="Salzberg S.L."/>
            <person name="Lewis M.R."/>
            <person name="Radune D."/>
            <person name="Holtzapple E.K."/>
            <person name="Khouri H.M."/>
            <person name="Wolf A.M."/>
            <person name="Utterback T.R."/>
            <person name="Hansen C.L."/>
            <person name="McDonald L.A."/>
            <person name="Feldblyum T.V."/>
            <person name="Angiuoli S.V."/>
            <person name="Dickinson T."/>
            <person name="Hickey E.K."/>
            <person name="Holt I.E."/>
            <person name="Loftus B.J."/>
            <person name="Yang F."/>
            <person name="Smith H.O."/>
            <person name="Venter J.C."/>
            <person name="Dougherty B.A."/>
            <person name="Morrison D.A."/>
            <person name="Hollingshead S.K."/>
            <person name="Fraser C.M."/>
        </authorList>
    </citation>
    <scope>NUCLEOTIDE SEQUENCE [LARGE SCALE GENOMIC DNA]</scope>
    <source>
        <strain>ATCC BAA-334 / TIGR4</strain>
    </source>
</reference>
<dbReference type="EMBL" id="AE005672">
    <property type="protein sequence ID" value="AAK74391.1"/>
    <property type="molecule type" value="Genomic_DNA"/>
</dbReference>
<dbReference type="PIR" id="F95024">
    <property type="entry name" value="F95024"/>
</dbReference>
<dbReference type="PIR" id="F97895">
    <property type="entry name" value="F97895"/>
</dbReference>
<dbReference type="RefSeq" id="WP_001055347.1">
    <property type="nucleotide sequence ID" value="NZ_CP155539.1"/>
</dbReference>
<dbReference type="SMR" id="Q97SV3"/>
<dbReference type="PaxDb" id="170187-SP_0211"/>
<dbReference type="EnsemblBacteria" id="AAK74391">
    <property type="protein sequence ID" value="AAK74391"/>
    <property type="gene ID" value="SP_0211"/>
</dbReference>
<dbReference type="KEGG" id="spn:SP_0211"/>
<dbReference type="eggNOG" id="COG0089">
    <property type="taxonomic scope" value="Bacteria"/>
</dbReference>
<dbReference type="PhylomeDB" id="Q97SV3"/>
<dbReference type="BioCyc" id="SPNE170187:G1FZB-216-MONOMER"/>
<dbReference type="Proteomes" id="UP000000585">
    <property type="component" value="Chromosome"/>
</dbReference>
<dbReference type="GO" id="GO:1990904">
    <property type="term" value="C:ribonucleoprotein complex"/>
    <property type="evidence" value="ECO:0007669"/>
    <property type="project" value="UniProtKB-KW"/>
</dbReference>
<dbReference type="GO" id="GO:0005840">
    <property type="term" value="C:ribosome"/>
    <property type="evidence" value="ECO:0007669"/>
    <property type="project" value="UniProtKB-KW"/>
</dbReference>
<dbReference type="GO" id="GO:0019843">
    <property type="term" value="F:rRNA binding"/>
    <property type="evidence" value="ECO:0007669"/>
    <property type="project" value="UniProtKB-UniRule"/>
</dbReference>
<dbReference type="GO" id="GO:0003735">
    <property type="term" value="F:structural constituent of ribosome"/>
    <property type="evidence" value="ECO:0007669"/>
    <property type="project" value="InterPro"/>
</dbReference>
<dbReference type="GO" id="GO:0006412">
    <property type="term" value="P:translation"/>
    <property type="evidence" value="ECO:0007669"/>
    <property type="project" value="UniProtKB-UniRule"/>
</dbReference>
<dbReference type="FunFam" id="3.30.70.330:FF:000001">
    <property type="entry name" value="50S ribosomal protein L23"/>
    <property type="match status" value="1"/>
</dbReference>
<dbReference type="Gene3D" id="3.30.70.330">
    <property type="match status" value="1"/>
</dbReference>
<dbReference type="HAMAP" id="MF_01369_B">
    <property type="entry name" value="Ribosomal_uL23_B"/>
    <property type="match status" value="1"/>
</dbReference>
<dbReference type="InterPro" id="IPR012677">
    <property type="entry name" value="Nucleotide-bd_a/b_plait_sf"/>
</dbReference>
<dbReference type="InterPro" id="IPR013025">
    <property type="entry name" value="Ribosomal_uL23-like"/>
</dbReference>
<dbReference type="InterPro" id="IPR012678">
    <property type="entry name" value="Ribosomal_uL23/eL15/eS24_sf"/>
</dbReference>
<dbReference type="InterPro" id="IPR001014">
    <property type="entry name" value="Ribosomal_uL23_CS"/>
</dbReference>
<dbReference type="NCBIfam" id="NF004361">
    <property type="entry name" value="PRK05738.2-1"/>
    <property type="match status" value="1"/>
</dbReference>
<dbReference type="NCBIfam" id="NF004363">
    <property type="entry name" value="PRK05738.2-4"/>
    <property type="match status" value="1"/>
</dbReference>
<dbReference type="PANTHER" id="PTHR11620">
    <property type="entry name" value="60S RIBOSOMAL PROTEIN L23A"/>
    <property type="match status" value="1"/>
</dbReference>
<dbReference type="Pfam" id="PF00276">
    <property type="entry name" value="Ribosomal_L23"/>
    <property type="match status" value="1"/>
</dbReference>
<dbReference type="SUPFAM" id="SSF54189">
    <property type="entry name" value="Ribosomal proteins S24e, L23 and L15e"/>
    <property type="match status" value="1"/>
</dbReference>
<dbReference type="PROSITE" id="PS00050">
    <property type="entry name" value="RIBOSOMAL_L23"/>
    <property type="match status" value="1"/>
</dbReference>
<accession>Q97SV3</accession>
<feature type="chain" id="PRO_1000068172" description="Large ribosomal subunit protein uL23">
    <location>
        <begin position="1"/>
        <end position="98"/>
    </location>
</feature>
<protein>
    <recommendedName>
        <fullName evidence="1">Large ribosomal subunit protein uL23</fullName>
    </recommendedName>
    <alternativeName>
        <fullName evidence="2">50S ribosomal protein L23</fullName>
    </alternativeName>
</protein>
<sequence length="98" mass="10786">MNLYDVIKKPVITESSMAQLEAGKYVFEVDTRAHKLLIKQAVEAAFEGVKVANVNTINVKPKAKRVGRYTGFTNKTKKAIITLTADSKAIELFAAEAE</sequence>